<accession>Q5KY26</accession>
<keyword id="KW-0002">3D-structure</keyword>
<keyword id="KW-0378">Hydrolase</keyword>
<keyword id="KW-1185">Reference proteome</keyword>
<sequence>MLVYNQEELVRFVEEAKQYARYGKVADYIPALGKANPNELSIAIYTPDDEVVSAGDVTVKVTLQSISKIIALALVLIDRGEDEVFHKVGMEPTDYPFHSIAKLEEKPAKPLNPMINAGALVVTSMIQGGSVSERLERLLAFVRRLAGNERISYSDEVARSEFETAFLNRSLCYFLKQHRIIDEDVEELMELYTKQCAIEMTCIDLARIGLVLALDGRDPHSSEPLMPLDVARICKTFMVTCGMYNSSGEFAIKVGIPAKSGVSGGILAAVPGRCGIGVFGPALDDKGNSLTGVKLLERLSKTYSLSIF</sequence>
<proteinExistence type="evidence at protein level"/>
<feature type="chain" id="PRO_1000048336" description="Glutaminase">
    <location>
        <begin position="1"/>
        <end position="308"/>
    </location>
</feature>
<feature type="binding site" evidence="1">
    <location>
        <position position="65"/>
    </location>
    <ligand>
        <name>substrate</name>
    </ligand>
</feature>
<feature type="binding site" evidence="1">
    <location>
        <position position="116"/>
    </location>
    <ligand>
        <name>substrate</name>
    </ligand>
</feature>
<feature type="binding site" evidence="1">
    <location>
        <position position="161"/>
    </location>
    <ligand>
        <name>substrate</name>
    </ligand>
</feature>
<feature type="binding site" evidence="1">
    <location>
        <position position="168"/>
    </location>
    <ligand>
        <name>substrate</name>
    </ligand>
</feature>
<feature type="binding site" evidence="1">
    <location>
        <position position="192"/>
    </location>
    <ligand>
        <name>substrate</name>
    </ligand>
</feature>
<feature type="binding site" evidence="1">
    <location>
        <position position="244"/>
    </location>
    <ligand>
        <name>substrate</name>
    </ligand>
</feature>
<feature type="binding site" evidence="1">
    <location>
        <position position="262"/>
    </location>
    <ligand>
        <name>substrate</name>
    </ligand>
</feature>
<feature type="helix" evidence="2">
    <location>
        <begin position="6"/>
        <end position="17"/>
    </location>
</feature>
<feature type="helix" evidence="2">
    <location>
        <begin position="18"/>
        <end position="22"/>
    </location>
</feature>
<feature type="helix" evidence="2">
    <location>
        <begin position="30"/>
        <end position="34"/>
    </location>
</feature>
<feature type="strand" evidence="2">
    <location>
        <begin position="41"/>
        <end position="46"/>
    </location>
</feature>
<feature type="turn" evidence="2">
    <location>
        <begin position="47"/>
        <end position="49"/>
    </location>
</feature>
<feature type="strand" evidence="2">
    <location>
        <begin position="50"/>
        <end position="56"/>
    </location>
</feature>
<feature type="helix" evidence="2">
    <location>
        <begin position="66"/>
        <end position="87"/>
    </location>
</feature>
<feature type="helix" evidence="2">
    <location>
        <begin position="116"/>
        <end position="123"/>
    </location>
</feature>
<feature type="strand" evidence="2">
    <location>
        <begin position="128"/>
        <end position="130"/>
    </location>
</feature>
<feature type="helix" evidence="2">
    <location>
        <begin position="131"/>
        <end position="146"/>
    </location>
</feature>
<feature type="helix" evidence="2">
    <location>
        <begin position="155"/>
        <end position="164"/>
    </location>
</feature>
<feature type="helix" evidence="2">
    <location>
        <begin position="166"/>
        <end position="177"/>
    </location>
</feature>
<feature type="helix" evidence="2">
    <location>
        <begin position="185"/>
        <end position="196"/>
    </location>
</feature>
<feature type="strand" evidence="2">
    <location>
        <begin position="198"/>
        <end position="200"/>
    </location>
</feature>
<feature type="helix" evidence="2">
    <location>
        <begin position="202"/>
        <end position="213"/>
    </location>
</feature>
<feature type="turn" evidence="2">
    <location>
        <begin position="214"/>
        <end position="216"/>
    </location>
</feature>
<feature type="turn" evidence="2">
    <location>
        <begin position="219"/>
        <end position="221"/>
    </location>
</feature>
<feature type="strand" evidence="2">
    <location>
        <begin position="224"/>
        <end position="226"/>
    </location>
</feature>
<feature type="helix" evidence="2">
    <location>
        <begin position="228"/>
        <end position="240"/>
    </location>
</feature>
<feature type="strand" evidence="2">
    <location>
        <begin position="241"/>
        <end position="243"/>
    </location>
</feature>
<feature type="helix" evidence="2">
    <location>
        <begin position="247"/>
        <end position="253"/>
    </location>
</feature>
<feature type="strand" evidence="2">
    <location>
        <begin position="258"/>
        <end position="260"/>
    </location>
</feature>
<feature type="strand" evidence="2">
    <location>
        <begin position="264"/>
        <end position="270"/>
    </location>
</feature>
<feature type="turn" evidence="2">
    <location>
        <begin position="271"/>
        <end position="273"/>
    </location>
</feature>
<feature type="strand" evidence="2">
    <location>
        <begin position="274"/>
        <end position="279"/>
    </location>
</feature>
<feature type="strand" evidence="2">
    <location>
        <begin position="287"/>
        <end position="289"/>
    </location>
</feature>
<feature type="helix" evidence="2">
    <location>
        <begin position="290"/>
        <end position="303"/>
    </location>
</feature>
<reference key="1">
    <citation type="journal article" date="2004" name="Nucleic Acids Res.">
        <title>Thermoadaptation trait revealed by the genome sequence of thermophilic Geobacillus kaustophilus.</title>
        <authorList>
            <person name="Takami H."/>
            <person name="Takaki Y."/>
            <person name="Chee G.-J."/>
            <person name="Nishi S."/>
            <person name="Shimamura S."/>
            <person name="Suzuki H."/>
            <person name="Matsui S."/>
            <person name="Uchiyama I."/>
        </authorList>
    </citation>
    <scope>NUCLEOTIDE SEQUENCE [LARGE SCALE GENOMIC DNA]</scope>
    <source>
        <strain>HTA426</strain>
    </source>
</reference>
<dbReference type="EC" id="3.5.1.2" evidence="1"/>
<dbReference type="EMBL" id="BA000043">
    <property type="protein sequence ID" value="BAD76410.1"/>
    <property type="molecule type" value="Genomic_DNA"/>
</dbReference>
<dbReference type="RefSeq" id="WP_011231610.1">
    <property type="nucleotide sequence ID" value="NC_006510.1"/>
</dbReference>
<dbReference type="PDB" id="2PBY">
    <property type="method" value="X-ray"/>
    <property type="resolution" value="2.07 A"/>
    <property type="chains" value="A/B/C/D=1-308"/>
</dbReference>
<dbReference type="PDBsum" id="2PBY"/>
<dbReference type="SMR" id="Q5KY26"/>
<dbReference type="STRING" id="235909.GK2125"/>
<dbReference type="GeneID" id="32063975"/>
<dbReference type="KEGG" id="gka:GK2125"/>
<dbReference type="PATRIC" id="fig|235909.7.peg.2278"/>
<dbReference type="eggNOG" id="COG2066">
    <property type="taxonomic scope" value="Bacteria"/>
</dbReference>
<dbReference type="HOGENOM" id="CLU_027932_1_0_9"/>
<dbReference type="EvolutionaryTrace" id="Q5KY26"/>
<dbReference type="Proteomes" id="UP000001172">
    <property type="component" value="Chromosome"/>
</dbReference>
<dbReference type="GO" id="GO:0004359">
    <property type="term" value="F:glutaminase activity"/>
    <property type="evidence" value="ECO:0007669"/>
    <property type="project" value="UniProtKB-UniRule"/>
</dbReference>
<dbReference type="GO" id="GO:0006537">
    <property type="term" value="P:glutamate biosynthetic process"/>
    <property type="evidence" value="ECO:0007669"/>
    <property type="project" value="TreeGrafter"/>
</dbReference>
<dbReference type="GO" id="GO:0006543">
    <property type="term" value="P:glutamine catabolic process"/>
    <property type="evidence" value="ECO:0007669"/>
    <property type="project" value="TreeGrafter"/>
</dbReference>
<dbReference type="FunFam" id="3.40.710.10:FF:000005">
    <property type="entry name" value="Glutaminase"/>
    <property type="match status" value="1"/>
</dbReference>
<dbReference type="Gene3D" id="3.40.710.10">
    <property type="entry name" value="DD-peptidase/beta-lactamase superfamily"/>
    <property type="match status" value="1"/>
</dbReference>
<dbReference type="HAMAP" id="MF_00313">
    <property type="entry name" value="Glutaminase"/>
    <property type="match status" value="1"/>
</dbReference>
<dbReference type="InterPro" id="IPR012338">
    <property type="entry name" value="Beta-lactam/transpept-like"/>
</dbReference>
<dbReference type="InterPro" id="IPR015868">
    <property type="entry name" value="Glutaminase"/>
</dbReference>
<dbReference type="NCBIfam" id="TIGR03814">
    <property type="entry name" value="Gln_ase"/>
    <property type="match status" value="1"/>
</dbReference>
<dbReference type="PANTHER" id="PTHR12544">
    <property type="entry name" value="GLUTAMINASE"/>
    <property type="match status" value="1"/>
</dbReference>
<dbReference type="PANTHER" id="PTHR12544:SF29">
    <property type="entry name" value="GLUTAMINASE"/>
    <property type="match status" value="1"/>
</dbReference>
<dbReference type="Pfam" id="PF04960">
    <property type="entry name" value="Glutaminase"/>
    <property type="match status" value="1"/>
</dbReference>
<dbReference type="SUPFAM" id="SSF56601">
    <property type="entry name" value="beta-lactamase/transpeptidase-like"/>
    <property type="match status" value="1"/>
</dbReference>
<gene>
    <name evidence="1" type="primary">glsA</name>
    <name type="ordered locus">GK2125</name>
</gene>
<comment type="catalytic activity">
    <reaction evidence="1">
        <text>L-glutamine + H2O = L-glutamate + NH4(+)</text>
        <dbReference type="Rhea" id="RHEA:15889"/>
        <dbReference type="ChEBI" id="CHEBI:15377"/>
        <dbReference type="ChEBI" id="CHEBI:28938"/>
        <dbReference type="ChEBI" id="CHEBI:29985"/>
        <dbReference type="ChEBI" id="CHEBI:58359"/>
        <dbReference type="EC" id="3.5.1.2"/>
    </reaction>
</comment>
<comment type="subunit">
    <text evidence="1">Homotetramer.</text>
</comment>
<comment type="similarity">
    <text evidence="1">Belongs to the glutaminase family.</text>
</comment>
<organism>
    <name type="scientific">Geobacillus kaustophilus (strain HTA426)</name>
    <dbReference type="NCBI Taxonomy" id="235909"/>
    <lineage>
        <taxon>Bacteria</taxon>
        <taxon>Bacillati</taxon>
        <taxon>Bacillota</taxon>
        <taxon>Bacilli</taxon>
        <taxon>Bacillales</taxon>
        <taxon>Anoxybacillaceae</taxon>
        <taxon>Geobacillus</taxon>
        <taxon>Geobacillus thermoleovorans group</taxon>
    </lineage>
</organism>
<protein>
    <recommendedName>
        <fullName evidence="1">Glutaminase</fullName>
        <ecNumber evidence="1">3.5.1.2</ecNumber>
    </recommendedName>
</protein>
<name>GLSA_GEOKA</name>
<evidence type="ECO:0000255" key="1">
    <source>
        <dbReference type="HAMAP-Rule" id="MF_00313"/>
    </source>
</evidence>
<evidence type="ECO:0007829" key="2">
    <source>
        <dbReference type="PDB" id="2PBY"/>
    </source>
</evidence>